<organism>
    <name type="scientific">Shewanella baltica (strain OS195)</name>
    <dbReference type="NCBI Taxonomy" id="399599"/>
    <lineage>
        <taxon>Bacteria</taxon>
        <taxon>Pseudomonadati</taxon>
        <taxon>Pseudomonadota</taxon>
        <taxon>Gammaproteobacteria</taxon>
        <taxon>Alteromonadales</taxon>
        <taxon>Shewanellaceae</taxon>
        <taxon>Shewanella</taxon>
    </lineage>
</organism>
<gene>
    <name evidence="1" type="primary">ruvC</name>
    <name type="ordered locus">Sbal195_2421</name>
</gene>
<keyword id="KW-0963">Cytoplasm</keyword>
<keyword id="KW-0227">DNA damage</keyword>
<keyword id="KW-0233">DNA recombination</keyword>
<keyword id="KW-0234">DNA repair</keyword>
<keyword id="KW-0238">DNA-binding</keyword>
<keyword id="KW-0255">Endonuclease</keyword>
<keyword id="KW-0378">Hydrolase</keyword>
<keyword id="KW-0460">Magnesium</keyword>
<keyword id="KW-0479">Metal-binding</keyword>
<keyword id="KW-0540">Nuclease</keyword>
<comment type="function">
    <text evidence="1">The RuvA-RuvB-RuvC complex processes Holliday junction (HJ) DNA during genetic recombination and DNA repair. Endonuclease that resolves HJ intermediates. Cleaves cruciform DNA by making single-stranded nicks across the HJ at symmetrical positions within the homologous arms, yielding a 5'-phosphate and a 3'-hydroxyl group; requires a central core of homology in the junction. The consensus cleavage sequence is 5'-(A/T)TT(C/G)-3'. Cleavage occurs on the 3'-side of the TT dinucleotide at the point of strand exchange. HJ branch migration catalyzed by RuvA-RuvB allows RuvC to scan DNA until it finds its consensus sequence, where it cleaves and resolves the cruciform DNA.</text>
</comment>
<comment type="catalytic activity">
    <reaction evidence="1">
        <text>Endonucleolytic cleavage at a junction such as a reciprocal single-stranded crossover between two homologous DNA duplexes (Holliday junction).</text>
        <dbReference type="EC" id="3.1.21.10"/>
    </reaction>
</comment>
<comment type="cofactor">
    <cofactor evidence="1">
        <name>Mg(2+)</name>
        <dbReference type="ChEBI" id="CHEBI:18420"/>
    </cofactor>
    <text evidence="1">Binds 2 Mg(2+) ion per subunit.</text>
</comment>
<comment type="subunit">
    <text evidence="1">Homodimer which binds Holliday junction (HJ) DNA. The HJ becomes 2-fold symmetrical on binding to RuvC with unstacked arms; it has a different conformation from HJ DNA in complex with RuvA. In the full resolvosome a probable DNA-RuvA(4)-RuvB(12)-RuvC(2) complex forms which resolves the HJ.</text>
</comment>
<comment type="subcellular location">
    <subcellularLocation>
        <location evidence="1">Cytoplasm</location>
    </subcellularLocation>
</comment>
<comment type="similarity">
    <text evidence="1">Belongs to the RuvC family.</text>
</comment>
<feature type="chain" id="PRO_1000074499" description="Crossover junction endodeoxyribonuclease RuvC">
    <location>
        <begin position="1"/>
        <end position="173"/>
    </location>
</feature>
<feature type="active site" evidence="1">
    <location>
        <position position="8"/>
    </location>
</feature>
<feature type="active site" evidence="1">
    <location>
        <position position="67"/>
    </location>
</feature>
<feature type="active site" evidence="1">
    <location>
        <position position="139"/>
    </location>
</feature>
<feature type="binding site" evidence="1">
    <location>
        <position position="8"/>
    </location>
    <ligand>
        <name>Mg(2+)</name>
        <dbReference type="ChEBI" id="CHEBI:18420"/>
        <label>1</label>
    </ligand>
</feature>
<feature type="binding site" evidence="1">
    <location>
        <position position="67"/>
    </location>
    <ligand>
        <name>Mg(2+)</name>
        <dbReference type="ChEBI" id="CHEBI:18420"/>
        <label>2</label>
    </ligand>
</feature>
<feature type="binding site" evidence="1">
    <location>
        <position position="139"/>
    </location>
    <ligand>
        <name>Mg(2+)</name>
        <dbReference type="ChEBI" id="CHEBI:18420"/>
        <label>1</label>
    </ligand>
</feature>
<name>RUVC_SHEB9</name>
<protein>
    <recommendedName>
        <fullName evidence="1">Crossover junction endodeoxyribonuclease RuvC</fullName>
        <ecNumber evidence="1">3.1.21.10</ecNumber>
    </recommendedName>
    <alternativeName>
        <fullName evidence="1">Holliday junction nuclease RuvC</fullName>
    </alternativeName>
    <alternativeName>
        <fullName evidence="1">Holliday junction resolvase RuvC</fullName>
    </alternativeName>
</protein>
<proteinExistence type="inferred from homology"/>
<sequence length="173" mass="18495">MAIILGVDPGSRITGYGVIQCQGRHQIYLGSGCIRTSSEELPGRLKQIFDGITEIIRQYQPDEFAIERVFMAKNADSALKLGQARGAAIVAATVANLPVAEYSATQIKSAVVGTGRAQKAQVQHMIQQLLKLPAAPQADAADALGVAVCHYHTSQSLIALSGRATARTYGRYR</sequence>
<reference key="1">
    <citation type="submission" date="2007-11" db="EMBL/GenBank/DDBJ databases">
        <title>Complete sequence of chromosome of Shewanella baltica OS195.</title>
        <authorList>
            <consortium name="US DOE Joint Genome Institute"/>
            <person name="Copeland A."/>
            <person name="Lucas S."/>
            <person name="Lapidus A."/>
            <person name="Barry K."/>
            <person name="Glavina del Rio T."/>
            <person name="Dalin E."/>
            <person name="Tice H."/>
            <person name="Pitluck S."/>
            <person name="Chain P."/>
            <person name="Malfatti S."/>
            <person name="Shin M."/>
            <person name="Vergez L."/>
            <person name="Schmutz J."/>
            <person name="Larimer F."/>
            <person name="Land M."/>
            <person name="Hauser L."/>
            <person name="Kyrpides N."/>
            <person name="Kim E."/>
            <person name="Brettar I."/>
            <person name="Rodrigues J."/>
            <person name="Konstantinidis K."/>
            <person name="Klappenbach J."/>
            <person name="Hofle M."/>
            <person name="Tiedje J."/>
            <person name="Richardson P."/>
        </authorList>
    </citation>
    <scope>NUCLEOTIDE SEQUENCE [LARGE SCALE GENOMIC DNA]</scope>
    <source>
        <strain>OS195</strain>
    </source>
</reference>
<accession>A9L3H9</accession>
<dbReference type="EC" id="3.1.21.10" evidence="1"/>
<dbReference type="EMBL" id="CP000891">
    <property type="protein sequence ID" value="ABX49589.1"/>
    <property type="molecule type" value="Genomic_DNA"/>
</dbReference>
<dbReference type="RefSeq" id="WP_006081743.1">
    <property type="nucleotide sequence ID" value="NC_009997.1"/>
</dbReference>
<dbReference type="SMR" id="A9L3H9"/>
<dbReference type="GeneID" id="11772538"/>
<dbReference type="KEGG" id="sbn:Sbal195_2421"/>
<dbReference type="HOGENOM" id="CLU_091257_2_1_6"/>
<dbReference type="Proteomes" id="UP000000770">
    <property type="component" value="Chromosome"/>
</dbReference>
<dbReference type="GO" id="GO:0005737">
    <property type="term" value="C:cytoplasm"/>
    <property type="evidence" value="ECO:0007669"/>
    <property type="project" value="UniProtKB-SubCell"/>
</dbReference>
<dbReference type="GO" id="GO:0048476">
    <property type="term" value="C:Holliday junction resolvase complex"/>
    <property type="evidence" value="ECO:0007669"/>
    <property type="project" value="UniProtKB-UniRule"/>
</dbReference>
<dbReference type="GO" id="GO:0008821">
    <property type="term" value="F:crossover junction DNA endonuclease activity"/>
    <property type="evidence" value="ECO:0007669"/>
    <property type="project" value="UniProtKB-UniRule"/>
</dbReference>
<dbReference type="GO" id="GO:0003677">
    <property type="term" value="F:DNA binding"/>
    <property type="evidence" value="ECO:0007669"/>
    <property type="project" value="UniProtKB-KW"/>
</dbReference>
<dbReference type="GO" id="GO:0000287">
    <property type="term" value="F:magnesium ion binding"/>
    <property type="evidence" value="ECO:0007669"/>
    <property type="project" value="UniProtKB-UniRule"/>
</dbReference>
<dbReference type="GO" id="GO:0006310">
    <property type="term" value="P:DNA recombination"/>
    <property type="evidence" value="ECO:0007669"/>
    <property type="project" value="UniProtKB-UniRule"/>
</dbReference>
<dbReference type="GO" id="GO:0006281">
    <property type="term" value="P:DNA repair"/>
    <property type="evidence" value="ECO:0007669"/>
    <property type="project" value="UniProtKB-UniRule"/>
</dbReference>
<dbReference type="CDD" id="cd16962">
    <property type="entry name" value="RuvC"/>
    <property type="match status" value="1"/>
</dbReference>
<dbReference type="FunFam" id="3.30.420.10:FF:000002">
    <property type="entry name" value="Crossover junction endodeoxyribonuclease RuvC"/>
    <property type="match status" value="1"/>
</dbReference>
<dbReference type="Gene3D" id="3.30.420.10">
    <property type="entry name" value="Ribonuclease H-like superfamily/Ribonuclease H"/>
    <property type="match status" value="1"/>
</dbReference>
<dbReference type="HAMAP" id="MF_00034">
    <property type="entry name" value="RuvC"/>
    <property type="match status" value="1"/>
</dbReference>
<dbReference type="InterPro" id="IPR012337">
    <property type="entry name" value="RNaseH-like_sf"/>
</dbReference>
<dbReference type="InterPro" id="IPR036397">
    <property type="entry name" value="RNaseH_sf"/>
</dbReference>
<dbReference type="InterPro" id="IPR020563">
    <property type="entry name" value="X-over_junc_endoDNase_Mg_BS"/>
</dbReference>
<dbReference type="InterPro" id="IPR002176">
    <property type="entry name" value="X-over_junc_endoDNase_RuvC"/>
</dbReference>
<dbReference type="NCBIfam" id="NF000711">
    <property type="entry name" value="PRK00039.2-1"/>
    <property type="match status" value="1"/>
</dbReference>
<dbReference type="NCBIfam" id="TIGR00228">
    <property type="entry name" value="ruvC"/>
    <property type="match status" value="1"/>
</dbReference>
<dbReference type="PANTHER" id="PTHR30194">
    <property type="entry name" value="CROSSOVER JUNCTION ENDODEOXYRIBONUCLEASE RUVC"/>
    <property type="match status" value="1"/>
</dbReference>
<dbReference type="PANTHER" id="PTHR30194:SF3">
    <property type="entry name" value="CROSSOVER JUNCTION ENDODEOXYRIBONUCLEASE RUVC"/>
    <property type="match status" value="1"/>
</dbReference>
<dbReference type="Pfam" id="PF02075">
    <property type="entry name" value="RuvC"/>
    <property type="match status" value="1"/>
</dbReference>
<dbReference type="PRINTS" id="PR00696">
    <property type="entry name" value="RSOLVASERUVC"/>
</dbReference>
<dbReference type="SUPFAM" id="SSF53098">
    <property type="entry name" value="Ribonuclease H-like"/>
    <property type="match status" value="1"/>
</dbReference>
<dbReference type="PROSITE" id="PS01321">
    <property type="entry name" value="RUVC"/>
    <property type="match status" value="1"/>
</dbReference>
<evidence type="ECO:0000255" key="1">
    <source>
        <dbReference type="HAMAP-Rule" id="MF_00034"/>
    </source>
</evidence>